<protein>
    <recommendedName>
        <fullName evidence="1">3-isopropylmalate dehydratase large subunit</fullName>
        <ecNumber evidence="1">4.2.1.33</ecNumber>
    </recommendedName>
    <alternativeName>
        <fullName evidence="1">Alpha-IPM isomerase</fullName>
        <shortName evidence="1">IPMI</shortName>
    </alternativeName>
    <alternativeName>
        <fullName evidence="1">Isopropylmalate isomerase</fullName>
    </alternativeName>
</protein>
<name>LEUC_CLOB8</name>
<proteinExistence type="inferred from homology"/>
<dbReference type="EC" id="4.2.1.33" evidence="1"/>
<dbReference type="EMBL" id="CP000721">
    <property type="protein sequence ID" value="ABR32404.1"/>
    <property type="molecule type" value="Genomic_DNA"/>
</dbReference>
<dbReference type="RefSeq" id="WP_011967566.1">
    <property type="nucleotide sequence ID" value="NC_009617.1"/>
</dbReference>
<dbReference type="SMR" id="A6LPX4"/>
<dbReference type="KEGG" id="cbe:Cbei_0214"/>
<dbReference type="eggNOG" id="COG0065">
    <property type="taxonomic scope" value="Bacteria"/>
</dbReference>
<dbReference type="HOGENOM" id="CLU_006714_3_4_9"/>
<dbReference type="UniPathway" id="UPA00048">
    <property type="reaction ID" value="UER00071"/>
</dbReference>
<dbReference type="Proteomes" id="UP000000565">
    <property type="component" value="Chromosome"/>
</dbReference>
<dbReference type="GO" id="GO:0003861">
    <property type="term" value="F:3-isopropylmalate dehydratase activity"/>
    <property type="evidence" value="ECO:0007669"/>
    <property type="project" value="UniProtKB-UniRule"/>
</dbReference>
<dbReference type="GO" id="GO:0051539">
    <property type="term" value="F:4 iron, 4 sulfur cluster binding"/>
    <property type="evidence" value="ECO:0007669"/>
    <property type="project" value="UniProtKB-KW"/>
</dbReference>
<dbReference type="GO" id="GO:0046872">
    <property type="term" value="F:metal ion binding"/>
    <property type="evidence" value="ECO:0007669"/>
    <property type="project" value="UniProtKB-KW"/>
</dbReference>
<dbReference type="GO" id="GO:0009098">
    <property type="term" value="P:L-leucine biosynthetic process"/>
    <property type="evidence" value="ECO:0007669"/>
    <property type="project" value="UniProtKB-UniRule"/>
</dbReference>
<dbReference type="CDD" id="cd01583">
    <property type="entry name" value="IPMI"/>
    <property type="match status" value="1"/>
</dbReference>
<dbReference type="Gene3D" id="3.30.499.10">
    <property type="entry name" value="Aconitase, domain 3"/>
    <property type="match status" value="2"/>
</dbReference>
<dbReference type="HAMAP" id="MF_01027">
    <property type="entry name" value="LeuC_type2"/>
    <property type="match status" value="1"/>
</dbReference>
<dbReference type="InterPro" id="IPR015931">
    <property type="entry name" value="Acnase/IPM_dHydase_lsu_aba_1/3"/>
</dbReference>
<dbReference type="InterPro" id="IPR001030">
    <property type="entry name" value="Acoase/IPM_deHydtase_lsu_aba"/>
</dbReference>
<dbReference type="InterPro" id="IPR018136">
    <property type="entry name" value="Aconitase_4Fe-4S_BS"/>
</dbReference>
<dbReference type="InterPro" id="IPR036008">
    <property type="entry name" value="Aconitase_4Fe-4S_dom"/>
</dbReference>
<dbReference type="InterPro" id="IPR011826">
    <property type="entry name" value="HAcnase/IPMdehydase_lsu_prok"/>
</dbReference>
<dbReference type="InterPro" id="IPR006251">
    <property type="entry name" value="Homoacnase/IPMdehydase_lsu"/>
</dbReference>
<dbReference type="InterPro" id="IPR050067">
    <property type="entry name" value="IPM_dehydratase_rel_enz"/>
</dbReference>
<dbReference type="InterPro" id="IPR033941">
    <property type="entry name" value="IPMI_cat"/>
</dbReference>
<dbReference type="InterPro" id="IPR011823">
    <property type="entry name" value="IsopropMal_deHydtase_lsu_bac"/>
</dbReference>
<dbReference type="NCBIfam" id="TIGR01343">
    <property type="entry name" value="hacA_fam"/>
    <property type="match status" value="1"/>
</dbReference>
<dbReference type="NCBIfam" id="TIGR02086">
    <property type="entry name" value="IPMI_arch"/>
    <property type="match status" value="1"/>
</dbReference>
<dbReference type="NCBIfam" id="TIGR02083">
    <property type="entry name" value="LEU2"/>
    <property type="match status" value="1"/>
</dbReference>
<dbReference type="NCBIfam" id="NF001614">
    <property type="entry name" value="PRK00402.1"/>
    <property type="match status" value="1"/>
</dbReference>
<dbReference type="PANTHER" id="PTHR43822:SF16">
    <property type="entry name" value="3-ISOPROPYLMALATE DEHYDRATASE LARGE SUBUNIT 2"/>
    <property type="match status" value="1"/>
</dbReference>
<dbReference type="PANTHER" id="PTHR43822">
    <property type="entry name" value="HOMOACONITASE, MITOCHONDRIAL-RELATED"/>
    <property type="match status" value="1"/>
</dbReference>
<dbReference type="Pfam" id="PF00330">
    <property type="entry name" value="Aconitase"/>
    <property type="match status" value="2"/>
</dbReference>
<dbReference type="PRINTS" id="PR00415">
    <property type="entry name" value="ACONITASE"/>
</dbReference>
<dbReference type="SUPFAM" id="SSF53732">
    <property type="entry name" value="Aconitase iron-sulfur domain"/>
    <property type="match status" value="1"/>
</dbReference>
<dbReference type="PROSITE" id="PS00450">
    <property type="entry name" value="ACONITASE_1"/>
    <property type="match status" value="1"/>
</dbReference>
<reference key="1">
    <citation type="submission" date="2007-06" db="EMBL/GenBank/DDBJ databases">
        <title>Complete sequence of Clostridium beijerinckii NCIMB 8052.</title>
        <authorList>
            <consortium name="US DOE Joint Genome Institute"/>
            <person name="Copeland A."/>
            <person name="Lucas S."/>
            <person name="Lapidus A."/>
            <person name="Barry K."/>
            <person name="Detter J.C."/>
            <person name="Glavina del Rio T."/>
            <person name="Hammon N."/>
            <person name="Israni S."/>
            <person name="Dalin E."/>
            <person name="Tice H."/>
            <person name="Pitluck S."/>
            <person name="Sims D."/>
            <person name="Brettin T."/>
            <person name="Bruce D."/>
            <person name="Tapia R."/>
            <person name="Brainard J."/>
            <person name="Schmutz J."/>
            <person name="Larimer F."/>
            <person name="Land M."/>
            <person name="Hauser L."/>
            <person name="Kyrpides N."/>
            <person name="Mikhailova N."/>
            <person name="Bennet G."/>
            <person name="Cann I."/>
            <person name="Chen J.-S."/>
            <person name="Contreras A.L."/>
            <person name="Jones D."/>
            <person name="Kashket E."/>
            <person name="Mitchell W."/>
            <person name="Stoddard S."/>
            <person name="Schwarz W."/>
            <person name="Qureshi N."/>
            <person name="Young M."/>
            <person name="Shi Z."/>
            <person name="Ezeji T."/>
            <person name="White B."/>
            <person name="Blaschek H."/>
            <person name="Richardson P."/>
        </authorList>
    </citation>
    <scope>NUCLEOTIDE SEQUENCE [LARGE SCALE GENOMIC DNA]</scope>
    <source>
        <strain>ATCC 51743 / NCIMB 8052</strain>
    </source>
</reference>
<organism>
    <name type="scientific">Clostridium beijerinckii (strain ATCC 51743 / NCIMB 8052)</name>
    <name type="common">Clostridium acetobutylicum</name>
    <dbReference type="NCBI Taxonomy" id="290402"/>
    <lineage>
        <taxon>Bacteria</taxon>
        <taxon>Bacillati</taxon>
        <taxon>Bacillota</taxon>
        <taxon>Clostridia</taxon>
        <taxon>Eubacteriales</taxon>
        <taxon>Clostridiaceae</taxon>
        <taxon>Clostridium</taxon>
    </lineage>
</organism>
<sequence length="419" mass="45219">MGMTMTQKILAAHAGLEAVKAGQLIEANLDLVLGNDITTPVAVNEFKKFGTDKVFSKSQIAIVPDHFTPNKDIKAAEQVKYIREFAQNMEIENFFEVGEMGIEHCLLPEKGLVVAGDVVIGADSHTCTYGALGAFSTGIGSTDMAAGMATGKCWFKVPSALKFVLKNKPAKWISGKDIILHIIGMIGVDGALYKSMEFVGDGLQYLSMDDRFTMANMAIEAGGKNGIFPVDDKTEEYLKDHASREWKVYEADEDAEYDKVFEIDLSELRPTVSFPHLPDNTRTIDNTGDVAIDQVVIGSCTNGRISDLRMARDILKGKKVKKGIRCIVIPGTQKIYLQAIKEGIVTDLVEAGAAFSTPTCGPCLGGHMGILAKGERCVSTTNRNFVGRMGHVESEVYLASPAVAAASALTGKITDPELV</sequence>
<comment type="function">
    <text evidence="1">Catalyzes the isomerization between 2-isopropylmalate and 3-isopropylmalate, via the formation of 2-isopropylmaleate.</text>
</comment>
<comment type="catalytic activity">
    <reaction evidence="1">
        <text>(2R,3S)-3-isopropylmalate = (2S)-2-isopropylmalate</text>
        <dbReference type="Rhea" id="RHEA:32287"/>
        <dbReference type="ChEBI" id="CHEBI:1178"/>
        <dbReference type="ChEBI" id="CHEBI:35121"/>
        <dbReference type="EC" id="4.2.1.33"/>
    </reaction>
</comment>
<comment type="cofactor">
    <cofactor evidence="1">
        <name>[4Fe-4S] cluster</name>
        <dbReference type="ChEBI" id="CHEBI:49883"/>
    </cofactor>
    <text evidence="1">Binds 1 [4Fe-4S] cluster per subunit.</text>
</comment>
<comment type="pathway">
    <text evidence="1">Amino-acid biosynthesis; L-leucine biosynthesis; L-leucine from 3-methyl-2-oxobutanoate: step 2/4.</text>
</comment>
<comment type="subunit">
    <text evidence="1">Heterodimer of LeuC and LeuD.</text>
</comment>
<comment type="similarity">
    <text evidence="1">Belongs to the aconitase/IPM isomerase family. LeuC type 2 subfamily.</text>
</comment>
<evidence type="ECO:0000255" key="1">
    <source>
        <dbReference type="HAMAP-Rule" id="MF_01027"/>
    </source>
</evidence>
<feature type="chain" id="PRO_1000084235" description="3-isopropylmalate dehydratase large subunit">
    <location>
        <begin position="1"/>
        <end position="419"/>
    </location>
</feature>
<feature type="binding site" evidence="1">
    <location>
        <position position="300"/>
    </location>
    <ligand>
        <name>[4Fe-4S] cluster</name>
        <dbReference type="ChEBI" id="CHEBI:49883"/>
    </ligand>
</feature>
<feature type="binding site" evidence="1">
    <location>
        <position position="360"/>
    </location>
    <ligand>
        <name>[4Fe-4S] cluster</name>
        <dbReference type="ChEBI" id="CHEBI:49883"/>
    </ligand>
</feature>
<feature type="binding site" evidence="1">
    <location>
        <position position="363"/>
    </location>
    <ligand>
        <name>[4Fe-4S] cluster</name>
        <dbReference type="ChEBI" id="CHEBI:49883"/>
    </ligand>
</feature>
<keyword id="KW-0004">4Fe-4S</keyword>
<keyword id="KW-0028">Amino-acid biosynthesis</keyword>
<keyword id="KW-0100">Branched-chain amino acid biosynthesis</keyword>
<keyword id="KW-0408">Iron</keyword>
<keyword id="KW-0411">Iron-sulfur</keyword>
<keyword id="KW-0432">Leucine biosynthesis</keyword>
<keyword id="KW-0456">Lyase</keyword>
<keyword id="KW-0479">Metal-binding</keyword>
<gene>
    <name evidence="1" type="primary">leuC</name>
    <name type="ordered locus">Cbei_0214</name>
</gene>
<accession>A6LPX4</accession>